<protein>
    <recommendedName>
        <fullName evidence="1">ATP synthase gamma chain</fullName>
    </recommendedName>
    <alternativeName>
        <fullName evidence="1">ATP synthase F1 sector gamma subunit</fullName>
    </alternativeName>
    <alternativeName>
        <fullName evidence="1">F-ATPase gamma subunit</fullName>
    </alternativeName>
</protein>
<gene>
    <name evidence="1" type="primary">atpG</name>
    <name type="ordered locus">SPs1356</name>
</gene>
<reference key="1">
    <citation type="journal article" date="2003" name="Genome Res.">
        <title>Genome sequence of an M3 strain of Streptococcus pyogenes reveals a large-scale genomic rearrangement in invasive strains and new insights into phage evolution.</title>
        <authorList>
            <person name="Nakagawa I."/>
            <person name="Kurokawa K."/>
            <person name="Yamashita A."/>
            <person name="Nakata M."/>
            <person name="Tomiyasu Y."/>
            <person name="Okahashi N."/>
            <person name="Kawabata S."/>
            <person name="Yamazaki K."/>
            <person name="Shiba T."/>
            <person name="Yasunaga T."/>
            <person name="Hayashi H."/>
            <person name="Hattori M."/>
            <person name="Hamada S."/>
        </authorList>
    </citation>
    <scope>NUCLEOTIDE SEQUENCE [LARGE SCALE GENOMIC DNA]</scope>
    <source>
        <strain>SSI-1</strain>
    </source>
</reference>
<dbReference type="EMBL" id="BA000034">
    <property type="protein sequence ID" value="BAC64451.1"/>
    <property type="molecule type" value="Genomic_DNA"/>
</dbReference>
<dbReference type="RefSeq" id="WP_011054331.1">
    <property type="nucleotide sequence ID" value="NC_004606.1"/>
</dbReference>
<dbReference type="SMR" id="P0CZ99"/>
<dbReference type="KEGG" id="sps:SPs1356"/>
<dbReference type="HOGENOM" id="CLU_050669_0_1_9"/>
<dbReference type="GO" id="GO:0005886">
    <property type="term" value="C:plasma membrane"/>
    <property type="evidence" value="ECO:0007669"/>
    <property type="project" value="UniProtKB-SubCell"/>
</dbReference>
<dbReference type="GO" id="GO:0045259">
    <property type="term" value="C:proton-transporting ATP synthase complex"/>
    <property type="evidence" value="ECO:0007669"/>
    <property type="project" value="UniProtKB-KW"/>
</dbReference>
<dbReference type="GO" id="GO:0005524">
    <property type="term" value="F:ATP binding"/>
    <property type="evidence" value="ECO:0007669"/>
    <property type="project" value="UniProtKB-UniRule"/>
</dbReference>
<dbReference type="GO" id="GO:0046933">
    <property type="term" value="F:proton-transporting ATP synthase activity, rotational mechanism"/>
    <property type="evidence" value="ECO:0007669"/>
    <property type="project" value="UniProtKB-UniRule"/>
</dbReference>
<dbReference type="GO" id="GO:0042777">
    <property type="term" value="P:proton motive force-driven plasma membrane ATP synthesis"/>
    <property type="evidence" value="ECO:0007669"/>
    <property type="project" value="UniProtKB-UniRule"/>
</dbReference>
<dbReference type="CDD" id="cd12151">
    <property type="entry name" value="F1-ATPase_gamma"/>
    <property type="match status" value="1"/>
</dbReference>
<dbReference type="FunFam" id="3.40.1380.10:FF:000002">
    <property type="entry name" value="ATP synthase gamma chain"/>
    <property type="match status" value="1"/>
</dbReference>
<dbReference type="Gene3D" id="3.40.1380.10">
    <property type="match status" value="1"/>
</dbReference>
<dbReference type="Gene3D" id="1.10.287.80">
    <property type="entry name" value="ATP synthase, gamma subunit, helix hairpin domain"/>
    <property type="match status" value="1"/>
</dbReference>
<dbReference type="HAMAP" id="MF_00815">
    <property type="entry name" value="ATP_synth_gamma_bact"/>
    <property type="match status" value="1"/>
</dbReference>
<dbReference type="InterPro" id="IPR035968">
    <property type="entry name" value="ATP_synth_F1_ATPase_gsu"/>
</dbReference>
<dbReference type="InterPro" id="IPR000131">
    <property type="entry name" value="ATP_synth_F1_gsu"/>
</dbReference>
<dbReference type="InterPro" id="IPR023632">
    <property type="entry name" value="ATP_synth_F1_gsu_CS"/>
</dbReference>
<dbReference type="NCBIfam" id="TIGR01146">
    <property type="entry name" value="ATPsyn_F1gamma"/>
    <property type="match status" value="1"/>
</dbReference>
<dbReference type="NCBIfam" id="NF004147">
    <property type="entry name" value="PRK05621.2-1"/>
    <property type="match status" value="1"/>
</dbReference>
<dbReference type="PANTHER" id="PTHR11693">
    <property type="entry name" value="ATP SYNTHASE GAMMA CHAIN"/>
    <property type="match status" value="1"/>
</dbReference>
<dbReference type="PANTHER" id="PTHR11693:SF22">
    <property type="entry name" value="ATP SYNTHASE SUBUNIT GAMMA, MITOCHONDRIAL"/>
    <property type="match status" value="1"/>
</dbReference>
<dbReference type="Pfam" id="PF00231">
    <property type="entry name" value="ATP-synt"/>
    <property type="match status" value="1"/>
</dbReference>
<dbReference type="PRINTS" id="PR00126">
    <property type="entry name" value="ATPASEGAMMA"/>
</dbReference>
<dbReference type="SUPFAM" id="SSF52943">
    <property type="entry name" value="ATP synthase (F1-ATPase), gamma subunit"/>
    <property type="match status" value="1"/>
</dbReference>
<dbReference type="PROSITE" id="PS00153">
    <property type="entry name" value="ATPASE_GAMMA"/>
    <property type="match status" value="1"/>
</dbReference>
<feature type="chain" id="PRO_0000411291" description="ATP synthase gamma chain">
    <location>
        <begin position="1"/>
        <end position="291"/>
    </location>
</feature>
<sequence>MAGSLSEIKAKIISTEKTSKITSAMRMVSSAKLVRSEQAARDFQIYASKIRQITTDLLKSELTIGSDNPMLVSRPVKKTGYIVITSDKGLVGGYNSKILKSVMDMITEYHADGDYEIISIGSVGSDFFKARGMNVAFELRGLADQPSFEQVRQIISQSVDMFVNEIFDELYVCYNHHVNSLTSQVRVQQMLPISDLVADEAAEEGVTGFELEPNRHDILDQLLPQFTESLIYGAIIDAKTAEHAAGMTAMQTATDNAKNVINDLTIQYNRARQAAITQEITEIVAGANALE</sequence>
<keyword id="KW-0066">ATP synthesis</keyword>
<keyword id="KW-1003">Cell membrane</keyword>
<keyword id="KW-0139">CF(1)</keyword>
<keyword id="KW-0375">Hydrogen ion transport</keyword>
<keyword id="KW-0406">Ion transport</keyword>
<keyword id="KW-0472">Membrane</keyword>
<keyword id="KW-0813">Transport</keyword>
<evidence type="ECO:0000255" key="1">
    <source>
        <dbReference type="HAMAP-Rule" id="MF_00815"/>
    </source>
</evidence>
<name>ATPG_STRPQ</name>
<accession>P0CZ99</accession>
<accession>Q79WQ4</accession>
<accession>Q8K827</accession>
<comment type="function">
    <text evidence="1">Produces ATP from ADP in the presence of a proton gradient across the membrane. The gamma chain is believed to be important in regulating ATPase activity and the flow of protons through the CF(0) complex.</text>
</comment>
<comment type="subunit">
    <text evidence="1">F-type ATPases have 2 components, CF(1) - the catalytic core - and CF(0) - the membrane proton channel. CF(1) has five subunits: alpha(3), beta(3), gamma(1), delta(1), epsilon(1). CF(0) has three main subunits: a, b and c.</text>
</comment>
<comment type="subcellular location">
    <subcellularLocation>
        <location evidence="1">Cell membrane</location>
        <topology evidence="1">Peripheral membrane protein</topology>
    </subcellularLocation>
</comment>
<comment type="similarity">
    <text evidence="1">Belongs to the ATPase gamma chain family.</text>
</comment>
<organism>
    <name type="scientific">Streptococcus pyogenes serotype M3 (strain SSI-1)</name>
    <dbReference type="NCBI Taxonomy" id="193567"/>
    <lineage>
        <taxon>Bacteria</taxon>
        <taxon>Bacillati</taxon>
        <taxon>Bacillota</taxon>
        <taxon>Bacilli</taxon>
        <taxon>Lactobacillales</taxon>
        <taxon>Streptococcaceae</taxon>
        <taxon>Streptococcus</taxon>
    </lineage>
</organism>
<proteinExistence type="inferred from homology"/>